<feature type="chain" id="PRO_1000075189" description="Transcription antitermination protein NusB">
    <location>
        <begin position="1"/>
        <end position="144"/>
    </location>
</feature>
<comment type="function">
    <text evidence="1">Involved in transcription antitermination. Required for transcription of ribosomal RNA (rRNA) genes. Binds specifically to the boxA antiterminator sequence of the ribosomal RNA (rrn) operons.</text>
</comment>
<comment type="similarity">
    <text evidence="1">Belongs to the NusB family.</text>
</comment>
<evidence type="ECO:0000255" key="1">
    <source>
        <dbReference type="HAMAP-Rule" id="MF_00073"/>
    </source>
</evidence>
<gene>
    <name evidence="1" type="primary">nusB</name>
    <name type="ordered locus">HSM_1300</name>
</gene>
<protein>
    <recommendedName>
        <fullName evidence="1">Transcription antitermination protein NusB</fullName>
    </recommendedName>
    <alternativeName>
        <fullName evidence="1">Antitermination factor NusB</fullName>
    </alternativeName>
</protein>
<dbReference type="EMBL" id="CP000947">
    <property type="protein sequence ID" value="ACA31033.1"/>
    <property type="molecule type" value="Genomic_DNA"/>
</dbReference>
<dbReference type="RefSeq" id="WP_012340458.1">
    <property type="nucleotide sequence ID" value="NC_010519.1"/>
</dbReference>
<dbReference type="SMR" id="B0UU23"/>
<dbReference type="STRING" id="228400.HSM_1300"/>
<dbReference type="GeneID" id="31487603"/>
<dbReference type="KEGG" id="hsm:HSM_1300"/>
<dbReference type="HOGENOM" id="CLU_087843_4_1_6"/>
<dbReference type="GO" id="GO:0005829">
    <property type="term" value="C:cytosol"/>
    <property type="evidence" value="ECO:0007669"/>
    <property type="project" value="TreeGrafter"/>
</dbReference>
<dbReference type="GO" id="GO:0003723">
    <property type="term" value="F:RNA binding"/>
    <property type="evidence" value="ECO:0007669"/>
    <property type="project" value="UniProtKB-UniRule"/>
</dbReference>
<dbReference type="GO" id="GO:0006353">
    <property type="term" value="P:DNA-templated transcription termination"/>
    <property type="evidence" value="ECO:0007669"/>
    <property type="project" value="UniProtKB-UniRule"/>
</dbReference>
<dbReference type="GO" id="GO:0031564">
    <property type="term" value="P:transcription antitermination"/>
    <property type="evidence" value="ECO:0007669"/>
    <property type="project" value="UniProtKB-KW"/>
</dbReference>
<dbReference type="CDD" id="cd00619">
    <property type="entry name" value="Terminator_NusB"/>
    <property type="match status" value="1"/>
</dbReference>
<dbReference type="FunFam" id="1.10.940.10:FF:000001">
    <property type="entry name" value="Transcription antitermination factor NusB"/>
    <property type="match status" value="1"/>
</dbReference>
<dbReference type="Gene3D" id="1.10.940.10">
    <property type="entry name" value="NusB-like"/>
    <property type="match status" value="1"/>
</dbReference>
<dbReference type="HAMAP" id="MF_00073">
    <property type="entry name" value="NusB"/>
    <property type="match status" value="1"/>
</dbReference>
<dbReference type="InterPro" id="IPR035926">
    <property type="entry name" value="NusB-like_sf"/>
</dbReference>
<dbReference type="InterPro" id="IPR011605">
    <property type="entry name" value="NusB_fam"/>
</dbReference>
<dbReference type="InterPro" id="IPR006027">
    <property type="entry name" value="NusB_RsmB_TIM44"/>
</dbReference>
<dbReference type="NCBIfam" id="TIGR01951">
    <property type="entry name" value="nusB"/>
    <property type="match status" value="1"/>
</dbReference>
<dbReference type="PANTHER" id="PTHR11078:SF3">
    <property type="entry name" value="ANTITERMINATION NUSB DOMAIN-CONTAINING PROTEIN"/>
    <property type="match status" value="1"/>
</dbReference>
<dbReference type="PANTHER" id="PTHR11078">
    <property type="entry name" value="N UTILIZATION SUBSTANCE PROTEIN B-RELATED"/>
    <property type="match status" value="1"/>
</dbReference>
<dbReference type="Pfam" id="PF01029">
    <property type="entry name" value="NusB"/>
    <property type="match status" value="1"/>
</dbReference>
<dbReference type="SUPFAM" id="SSF48013">
    <property type="entry name" value="NusB-like"/>
    <property type="match status" value="1"/>
</dbReference>
<name>NUSB_HISS2</name>
<keyword id="KW-0694">RNA-binding</keyword>
<keyword id="KW-0804">Transcription</keyword>
<keyword id="KW-0889">Transcription antitermination</keyword>
<keyword id="KW-0805">Transcription regulation</keyword>
<proteinExistence type="inferred from homology"/>
<sequence>MTEKVKKISPRRRARECAVQNLYSWAISKNSPEEIELNFIVDQDNEMKGVDMPYFRKLFHQTINHVETIDSTMAPYLDRDNVELDPIECAILRLAVYELKFELDVPYKVVINEAIEVAKVFGAEESHKYINGVLDKIAPALSRK</sequence>
<accession>B0UU23</accession>
<organism>
    <name type="scientific">Histophilus somni (strain 2336)</name>
    <name type="common">Haemophilus somnus</name>
    <dbReference type="NCBI Taxonomy" id="228400"/>
    <lineage>
        <taxon>Bacteria</taxon>
        <taxon>Pseudomonadati</taxon>
        <taxon>Pseudomonadota</taxon>
        <taxon>Gammaproteobacteria</taxon>
        <taxon>Pasteurellales</taxon>
        <taxon>Pasteurellaceae</taxon>
        <taxon>Histophilus</taxon>
    </lineage>
</organism>
<reference key="1">
    <citation type="submission" date="2008-02" db="EMBL/GenBank/DDBJ databases">
        <title>Complete sequence of Haemophilus somnus 2336.</title>
        <authorList>
            <consortium name="US DOE Joint Genome Institute"/>
            <person name="Siddaramappa S."/>
            <person name="Duncan A.J."/>
            <person name="Challacombe J.F."/>
            <person name="Rainey D."/>
            <person name="Gillaspy A.F."/>
            <person name="Carson M."/>
            <person name="Gipson J."/>
            <person name="Gipson M."/>
            <person name="Bruce D."/>
            <person name="Detter J.C."/>
            <person name="Han C.S."/>
            <person name="Land M."/>
            <person name="Tapia R."/>
            <person name="Thompson L.S."/>
            <person name="Orvis J."/>
            <person name="Zaitshik J."/>
            <person name="Barnes G."/>
            <person name="Brettin T.S."/>
            <person name="Dyer D.W."/>
            <person name="Inzana T.J."/>
        </authorList>
    </citation>
    <scope>NUCLEOTIDE SEQUENCE [LARGE SCALE GENOMIC DNA]</scope>
    <source>
        <strain>2336</strain>
    </source>
</reference>